<feature type="chain" id="PRO_0000281955" description="Putative F-box/LRR-repeat protein At3g49150">
    <location>
        <begin position="1"/>
        <end position="630"/>
    </location>
</feature>
<feature type="domain" description="F-box">
    <location>
        <begin position="15"/>
        <end position="63"/>
    </location>
</feature>
<feature type="repeat" description="LRR 1">
    <location>
        <begin position="101"/>
        <end position="129"/>
    </location>
</feature>
<feature type="repeat" description="LRR 2">
    <location>
        <begin position="152"/>
        <end position="178"/>
    </location>
</feature>
<feature type="repeat" description="LRR 3">
    <location>
        <begin position="180"/>
        <end position="205"/>
    </location>
</feature>
<feature type="repeat" description="LRR 4">
    <location>
        <begin position="228"/>
        <end position="253"/>
    </location>
</feature>
<feature type="repeat" description="LRR 5">
    <location>
        <begin position="300"/>
        <end position="325"/>
    </location>
</feature>
<feature type="repeat" description="LRR 6">
    <location>
        <begin position="337"/>
        <end position="362"/>
    </location>
</feature>
<feature type="repeat" description="LRR 7">
    <location>
        <begin position="406"/>
        <end position="436"/>
    </location>
</feature>
<feature type="repeat" description="LRR 8">
    <location>
        <begin position="437"/>
        <end position="465"/>
    </location>
</feature>
<feature type="repeat" description="LRR 9">
    <location>
        <begin position="567"/>
        <end position="590"/>
    </location>
</feature>
<organism>
    <name type="scientific">Arabidopsis thaliana</name>
    <name type="common">Mouse-ear cress</name>
    <dbReference type="NCBI Taxonomy" id="3702"/>
    <lineage>
        <taxon>Eukaryota</taxon>
        <taxon>Viridiplantae</taxon>
        <taxon>Streptophyta</taxon>
        <taxon>Embryophyta</taxon>
        <taxon>Tracheophyta</taxon>
        <taxon>Spermatophyta</taxon>
        <taxon>Magnoliopsida</taxon>
        <taxon>eudicotyledons</taxon>
        <taxon>Gunneridae</taxon>
        <taxon>Pentapetalae</taxon>
        <taxon>rosids</taxon>
        <taxon>malvids</taxon>
        <taxon>Brassicales</taxon>
        <taxon>Brassicaceae</taxon>
        <taxon>Camelineae</taxon>
        <taxon>Arabidopsis</taxon>
    </lineage>
</organism>
<gene>
    <name type="ordered locus">At3g49150</name>
    <name type="ORF">F2K15.10</name>
    <name type="ORF">T2J13.10</name>
</gene>
<comment type="sequence caution" evidence="1">
    <conflict type="erroneous gene model prediction">
        <sequence resource="EMBL-CDS" id="CAB61995"/>
    </conflict>
</comment>
<comment type="sequence caution" evidence="1">
    <conflict type="erroneous gene model prediction">
        <sequence resource="EMBL-CDS" id="CAB66394"/>
    </conflict>
</comment>
<accession>Q9M3B7</accession>
<accession>Q9SMV1</accession>
<proteinExistence type="predicted"/>
<protein>
    <recommendedName>
        <fullName>Putative F-box/LRR-repeat protein At3g49150</fullName>
    </recommendedName>
</protein>
<name>FBL54_ARATH</name>
<reference key="1">
    <citation type="journal article" date="2000" name="Nature">
        <title>Sequence and analysis of chromosome 3 of the plant Arabidopsis thaliana.</title>
        <authorList>
            <person name="Salanoubat M."/>
            <person name="Lemcke K."/>
            <person name="Rieger M."/>
            <person name="Ansorge W."/>
            <person name="Unseld M."/>
            <person name="Fartmann B."/>
            <person name="Valle G."/>
            <person name="Bloecker H."/>
            <person name="Perez-Alonso M."/>
            <person name="Obermaier B."/>
            <person name="Delseny M."/>
            <person name="Boutry M."/>
            <person name="Grivell L.A."/>
            <person name="Mache R."/>
            <person name="Puigdomenech P."/>
            <person name="De Simone V."/>
            <person name="Choisne N."/>
            <person name="Artiguenave F."/>
            <person name="Robert C."/>
            <person name="Brottier P."/>
            <person name="Wincker P."/>
            <person name="Cattolico L."/>
            <person name="Weissenbach J."/>
            <person name="Saurin W."/>
            <person name="Quetier F."/>
            <person name="Schaefer M."/>
            <person name="Mueller-Auer S."/>
            <person name="Gabel C."/>
            <person name="Fuchs M."/>
            <person name="Benes V."/>
            <person name="Wurmbach E."/>
            <person name="Drzonek H."/>
            <person name="Erfle H."/>
            <person name="Jordan N."/>
            <person name="Bangert S."/>
            <person name="Wiedelmann R."/>
            <person name="Kranz H."/>
            <person name="Voss H."/>
            <person name="Holland R."/>
            <person name="Brandt P."/>
            <person name="Nyakatura G."/>
            <person name="Vezzi A."/>
            <person name="D'Angelo M."/>
            <person name="Pallavicini A."/>
            <person name="Toppo S."/>
            <person name="Simionati B."/>
            <person name="Conrad A."/>
            <person name="Hornischer K."/>
            <person name="Kauer G."/>
            <person name="Loehnert T.-H."/>
            <person name="Nordsiek G."/>
            <person name="Reichelt J."/>
            <person name="Scharfe M."/>
            <person name="Schoen O."/>
            <person name="Bargues M."/>
            <person name="Terol J."/>
            <person name="Climent J."/>
            <person name="Navarro P."/>
            <person name="Collado C."/>
            <person name="Perez-Perez A."/>
            <person name="Ottenwaelder B."/>
            <person name="Duchemin D."/>
            <person name="Cooke R."/>
            <person name="Laudie M."/>
            <person name="Berger-Llauro C."/>
            <person name="Purnelle B."/>
            <person name="Masuy D."/>
            <person name="de Haan M."/>
            <person name="Maarse A.C."/>
            <person name="Alcaraz J.-P."/>
            <person name="Cottet A."/>
            <person name="Casacuberta E."/>
            <person name="Monfort A."/>
            <person name="Argiriou A."/>
            <person name="Flores M."/>
            <person name="Liguori R."/>
            <person name="Vitale D."/>
            <person name="Mannhaupt G."/>
            <person name="Haase D."/>
            <person name="Schoof H."/>
            <person name="Rudd S."/>
            <person name="Zaccaria P."/>
            <person name="Mewes H.-W."/>
            <person name="Mayer K.F.X."/>
            <person name="Kaul S."/>
            <person name="Town C.D."/>
            <person name="Koo H.L."/>
            <person name="Tallon L.J."/>
            <person name="Jenkins J."/>
            <person name="Rooney T."/>
            <person name="Rizzo M."/>
            <person name="Walts A."/>
            <person name="Utterback T."/>
            <person name="Fujii C.Y."/>
            <person name="Shea T.P."/>
            <person name="Creasy T.H."/>
            <person name="Haas B."/>
            <person name="Maiti R."/>
            <person name="Wu D."/>
            <person name="Peterson J."/>
            <person name="Van Aken S."/>
            <person name="Pai G."/>
            <person name="Militscher J."/>
            <person name="Sellers P."/>
            <person name="Gill J.E."/>
            <person name="Feldblyum T.V."/>
            <person name="Preuss D."/>
            <person name="Lin X."/>
            <person name="Nierman W.C."/>
            <person name="Salzberg S.L."/>
            <person name="White O."/>
            <person name="Venter J.C."/>
            <person name="Fraser C.M."/>
            <person name="Kaneko T."/>
            <person name="Nakamura Y."/>
            <person name="Sato S."/>
            <person name="Kato T."/>
            <person name="Asamizu E."/>
            <person name="Sasamoto S."/>
            <person name="Kimura T."/>
            <person name="Idesawa K."/>
            <person name="Kawashima K."/>
            <person name="Kishida Y."/>
            <person name="Kiyokawa C."/>
            <person name="Kohara M."/>
            <person name="Matsumoto M."/>
            <person name="Matsuno A."/>
            <person name="Muraki A."/>
            <person name="Nakayama S."/>
            <person name="Nakazaki N."/>
            <person name="Shinpo S."/>
            <person name="Takeuchi C."/>
            <person name="Wada T."/>
            <person name="Watanabe A."/>
            <person name="Yamada M."/>
            <person name="Yasuda M."/>
            <person name="Tabata S."/>
        </authorList>
    </citation>
    <scope>NUCLEOTIDE SEQUENCE [LARGE SCALE GENOMIC DNA]</scope>
    <source>
        <strain>cv. Columbia</strain>
    </source>
</reference>
<reference key="2">
    <citation type="journal article" date="2017" name="Plant J.">
        <title>Araport11: a complete reannotation of the Arabidopsis thaliana reference genome.</title>
        <authorList>
            <person name="Cheng C.Y."/>
            <person name="Krishnakumar V."/>
            <person name="Chan A.P."/>
            <person name="Thibaud-Nissen F."/>
            <person name="Schobel S."/>
            <person name="Town C.D."/>
        </authorList>
    </citation>
    <scope>GENOME REANNOTATION</scope>
    <source>
        <strain>cv. Columbia</strain>
    </source>
</reference>
<dbReference type="EMBL" id="AL132956">
    <property type="protein sequence ID" value="CAB66394.1"/>
    <property type="status" value="ALT_SEQ"/>
    <property type="molecule type" value="Genomic_DNA"/>
</dbReference>
<dbReference type="EMBL" id="AL132967">
    <property type="protein sequence ID" value="CAB61995.1"/>
    <property type="status" value="ALT_SEQ"/>
    <property type="molecule type" value="Genomic_DNA"/>
</dbReference>
<dbReference type="EMBL" id="CP002686">
    <property type="status" value="NOT_ANNOTATED_CDS"/>
    <property type="molecule type" value="Genomic_DNA"/>
</dbReference>
<dbReference type="PIR" id="T45820">
    <property type="entry name" value="T45820"/>
</dbReference>
<dbReference type="FunCoup" id="Q9M3B7">
    <property type="interactions" value="251"/>
</dbReference>
<dbReference type="STRING" id="3702.Q9M3B7"/>
<dbReference type="PaxDb" id="3702-AT3G49150.1"/>
<dbReference type="Araport" id="AT3G49150"/>
<dbReference type="TAIR" id="AT3G49150"/>
<dbReference type="HOGENOM" id="CLU_010721_7_4_1"/>
<dbReference type="InParanoid" id="Q9M3B7"/>
<dbReference type="PRO" id="PR:Q9M3B7"/>
<dbReference type="Proteomes" id="UP000006548">
    <property type="component" value="Chromosome 3"/>
</dbReference>
<dbReference type="ExpressionAtlas" id="Q9M3B7">
    <property type="expression patterns" value="baseline and differential"/>
</dbReference>
<dbReference type="CDD" id="cd22160">
    <property type="entry name" value="F-box_AtFBL13-like"/>
    <property type="match status" value="1"/>
</dbReference>
<dbReference type="Gene3D" id="1.20.1280.50">
    <property type="match status" value="1"/>
</dbReference>
<dbReference type="Gene3D" id="3.80.10.10">
    <property type="entry name" value="Ribonuclease Inhibitor"/>
    <property type="match status" value="1"/>
</dbReference>
<dbReference type="InterPro" id="IPR036047">
    <property type="entry name" value="F-box-like_dom_sf"/>
</dbReference>
<dbReference type="InterPro" id="IPR053781">
    <property type="entry name" value="F-box_AtFBL13-like"/>
</dbReference>
<dbReference type="InterPro" id="IPR001810">
    <property type="entry name" value="F-box_dom"/>
</dbReference>
<dbReference type="InterPro" id="IPR006566">
    <property type="entry name" value="FBD"/>
</dbReference>
<dbReference type="InterPro" id="IPR055294">
    <property type="entry name" value="FBL60-like"/>
</dbReference>
<dbReference type="InterPro" id="IPR032675">
    <property type="entry name" value="LRR_dom_sf"/>
</dbReference>
<dbReference type="InterPro" id="IPR055411">
    <property type="entry name" value="LRR_FXL15/At3g58940/PEG3-like"/>
</dbReference>
<dbReference type="PANTHER" id="PTHR31293">
    <property type="entry name" value="RNI-LIKE SUPERFAMILY PROTEIN"/>
    <property type="match status" value="1"/>
</dbReference>
<dbReference type="PANTHER" id="PTHR31293:SF16">
    <property type="entry name" value="RNI-LIKE SUPERFAMILY PROTEIN"/>
    <property type="match status" value="1"/>
</dbReference>
<dbReference type="Pfam" id="PF00646">
    <property type="entry name" value="F-box"/>
    <property type="match status" value="1"/>
</dbReference>
<dbReference type="Pfam" id="PF24758">
    <property type="entry name" value="LRR_At5g56370"/>
    <property type="match status" value="1"/>
</dbReference>
<dbReference type="SMART" id="SM00579">
    <property type="entry name" value="FBD"/>
    <property type="match status" value="1"/>
</dbReference>
<dbReference type="SUPFAM" id="SSF81383">
    <property type="entry name" value="F-box domain"/>
    <property type="match status" value="1"/>
</dbReference>
<dbReference type="SUPFAM" id="SSF52058">
    <property type="entry name" value="L domain-like"/>
    <property type="match status" value="1"/>
</dbReference>
<evidence type="ECO:0000305" key="1"/>
<sequence>MDICCKDIISDHSKKDIISDLPEALICHILSFLPIEDSALTSVLSKKWQHLFAFRPNLEFDDAVVYLNPDGERNETIFENFVDRVLSLQGDYPINKFSLTCRDFTDPTCVSRWISNVMERGVSDLDLRCIVYWDNGTMPPDIFVSKALVHLRIETGNGAFIDVEDVFLPNLKTLYLNKVLLRHSDNGFVKLITSCHVLEDLFIMNICWDGYLKRSLSSKTLKRLTFFCEDVHAVNPESVSFDTPNLVYFVYHDCVADKYKNMNFDSLVYASICLQMTSHQRTHASYEHLVGNATDFLLGISNVQILELFANTIEVLTFCCEQIPVFKNLVCLIIKTDQKAGWESLPVLLKNCPDLESLIFDGLHHNDTIKCEDVDGCLCKSSRGIPSCLSSSPVQFLTIWKFGEICDDYDDMEKQIELVMYFLETMPNLEEMKLFYDTQIYEDVISKLQMDLRRTLSLRSLFNARCYQPSCSGIIQRDDVHEEKPHYGSFLHQRSFSSSMILSQQHMMRSPSHFPLCSPFGVSTYRPMSTSHISGSDESGDVNHVAETLTDLVQQDTVIEVADAAIDSSIQLDFVQQIVHNVHSLTGLNWWASIVFTTFLIRGVTIPLMIECERWFSKRMVIKQCSFVNT</sequence>
<keyword id="KW-0433">Leucine-rich repeat</keyword>
<keyword id="KW-1185">Reference proteome</keyword>
<keyword id="KW-0677">Repeat</keyword>